<accession>Q8C138</accession>
<accession>D3Z6U0</accession>
<accession>Q3UXS3</accession>
<accession>Q8K180</accession>
<proteinExistence type="evidence at transcript level"/>
<comment type="function">
    <text evidence="1">Hydrolyzes bioactive fatty-acid esters of hydroxy-fatty acids (FAHFAs), but not other major classes of lipids (By similarity). Shows a preference for FAHFAs with branching distal from the carboxylate head group of the lipids (By similarity). Regulates the expression and the cell-associated anticoagulant activity of the inhibitor TFPI in endothelial cells (in vitro) (By similarity).</text>
</comment>
<comment type="catalytic activity">
    <reaction evidence="1">
        <text>9-hexadecanoyloxy-octadecanoate + H2O = 9-hydroxy-octadecanoate + hexadecanoate + H(+)</text>
        <dbReference type="Rhea" id="RHEA:52052"/>
        <dbReference type="ChEBI" id="CHEBI:7896"/>
        <dbReference type="ChEBI" id="CHEBI:15377"/>
        <dbReference type="ChEBI" id="CHEBI:15378"/>
        <dbReference type="ChEBI" id="CHEBI:83670"/>
        <dbReference type="ChEBI" id="CHEBI:136286"/>
    </reaction>
    <physiologicalReaction direction="left-to-right" evidence="1">
        <dbReference type="Rhea" id="RHEA:52053"/>
    </physiologicalReaction>
</comment>
<comment type="catalytic activity">
    <reaction evidence="1">
        <text>12-hexadecanoyloxy-octadecanoate + H2O = 12-hydroxyoctadecanoate + hexadecanoate + H(+)</text>
        <dbReference type="Rhea" id="RHEA:52056"/>
        <dbReference type="ChEBI" id="CHEBI:7896"/>
        <dbReference type="ChEBI" id="CHEBI:15377"/>
        <dbReference type="ChEBI" id="CHEBI:15378"/>
        <dbReference type="ChEBI" id="CHEBI:83677"/>
        <dbReference type="ChEBI" id="CHEBI:84201"/>
    </reaction>
    <physiologicalReaction direction="left-to-right" evidence="1">
        <dbReference type="Rhea" id="RHEA:52057"/>
    </physiologicalReaction>
</comment>
<comment type="catalytic activity">
    <reaction evidence="1">
        <text>9-(9Z-hexadecenoyloxy)-octadecanoate + H2O = (9Z)-hexadecenoate + 9-hydroxy-octadecanoate + H(+)</text>
        <dbReference type="Rhea" id="RHEA:52068"/>
        <dbReference type="ChEBI" id="CHEBI:15377"/>
        <dbReference type="ChEBI" id="CHEBI:15378"/>
        <dbReference type="ChEBI" id="CHEBI:32372"/>
        <dbReference type="ChEBI" id="CHEBI:136286"/>
        <dbReference type="ChEBI" id="CHEBI:136309"/>
    </reaction>
    <physiologicalReaction direction="left-to-right" evidence="1">
        <dbReference type="Rhea" id="RHEA:52069"/>
    </physiologicalReaction>
</comment>
<comment type="catalytic activity">
    <reaction evidence="1">
        <text>12-(9Z-hexadecenoyloxy)-octadecanoate + H2O = 12-hydroxyoctadecanoate + (9Z)-hexadecenoate + H(+)</text>
        <dbReference type="Rhea" id="RHEA:52072"/>
        <dbReference type="ChEBI" id="CHEBI:15377"/>
        <dbReference type="ChEBI" id="CHEBI:15378"/>
        <dbReference type="ChEBI" id="CHEBI:32372"/>
        <dbReference type="ChEBI" id="CHEBI:84201"/>
        <dbReference type="ChEBI" id="CHEBI:136312"/>
    </reaction>
    <physiologicalReaction direction="left-to-right" evidence="1">
        <dbReference type="Rhea" id="RHEA:52073"/>
    </physiologicalReaction>
</comment>
<comment type="catalytic activity">
    <reaction evidence="1">
        <text>13-(9Z-hexadecenoyloxy)-octadecanoate + H2O = 13-hydroxy-octadecanoate + (9Z)-hexadecenoate + H(+)</text>
        <dbReference type="Rhea" id="RHEA:52076"/>
        <dbReference type="ChEBI" id="CHEBI:15377"/>
        <dbReference type="ChEBI" id="CHEBI:15378"/>
        <dbReference type="ChEBI" id="CHEBI:32372"/>
        <dbReference type="ChEBI" id="CHEBI:136304"/>
        <dbReference type="ChEBI" id="CHEBI:136315"/>
    </reaction>
    <physiologicalReaction direction="left-to-right" evidence="1">
        <dbReference type="Rhea" id="RHEA:52077"/>
    </physiologicalReaction>
</comment>
<comment type="catalytic activity">
    <reaction evidence="1">
        <text>9-octadecanoyloxy-octadecanoate + H2O = 9-hydroxy-octadecanoate + octadecanoate + H(+)</text>
        <dbReference type="Rhea" id="RHEA:52096"/>
        <dbReference type="ChEBI" id="CHEBI:15377"/>
        <dbReference type="ChEBI" id="CHEBI:15378"/>
        <dbReference type="ChEBI" id="CHEBI:25629"/>
        <dbReference type="ChEBI" id="CHEBI:136286"/>
        <dbReference type="ChEBI" id="CHEBI:136373"/>
    </reaction>
    <physiologicalReaction direction="left-to-right" evidence="1">
        <dbReference type="Rhea" id="RHEA:52097"/>
    </physiologicalReaction>
</comment>
<comment type="catalytic activity">
    <reaction evidence="1">
        <text>12-octadecanoyloxy-octadecanoate + H2O = 12-hydroxyoctadecanoate + octadecanoate + H(+)</text>
        <dbReference type="Rhea" id="RHEA:52080"/>
        <dbReference type="ChEBI" id="CHEBI:15377"/>
        <dbReference type="ChEBI" id="CHEBI:15378"/>
        <dbReference type="ChEBI" id="CHEBI:25629"/>
        <dbReference type="ChEBI" id="CHEBI:84201"/>
        <dbReference type="ChEBI" id="CHEBI:136330"/>
    </reaction>
    <physiologicalReaction direction="left-to-right" evidence="1">
        <dbReference type="Rhea" id="RHEA:52081"/>
    </physiologicalReaction>
</comment>
<comment type="catalytic activity">
    <reaction evidence="1">
        <text>13-octadecanoyloxy-octadecanoate + H2O = 13-hydroxy-octadecanoate + octadecanoate + H(+)</text>
        <dbReference type="Rhea" id="RHEA:52084"/>
        <dbReference type="ChEBI" id="CHEBI:15377"/>
        <dbReference type="ChEBI" id="CHEBI:15378"/>
        <dbReference type="ChEBI" id="CHEBI:25629"/>
        <dbReference type="ChEBI" id="CHEBI:136304"/>
        <dbReference type="ChEBI" id="CHEBI:136335"/>
    </reaction>
    <physiologicalReaction direction="left-to-right" evidence="1">
        <dbReference type="Rhea" id="RHEA:52085"/>
    </physiologicalReaction>
</comment>
<comment type="catalytic activity">
    <reaction evidence="1">
        <text>9-(9Z-octadecenoyloxy)-octadecanoate + H2O = 9-hydroxy-octadecanoate + (9Z)-octadecenoate + H(+)</text>
        <dbReference type="Rhea" id="RHEA:52048"/>
        <dbReference type="ChEBI" id="CHEBI:15377"/>
        <dbReference type="ChEBI" id="CHEBI:15378"/>
        <dbReference type="ChEBI" id="CHEBI:30823"/>
        <dbReference type="ChEBI" id="CHEBI:136282"/>
        <dbReference type="ChEBI" id="CHEBI:136286"/>
    </reaction>
    <physiologicalReaction direction="left-to-right" evidence="1">
        <dbReference type="Rhea" id="RHEA:52049"/>
    </physiologicalReaction>
</comment>
<comment type="catalytic activity">
    <reaction evidence="1">
        <text>12-(9Z-octadecenoyloxy)-octadecanoate + H2O = 12-hydroxyoctadecanoate + (9Z)-octadecenoate + H(+)</text>
        <dbReference type="Rhea" id="RHEA:52060"/>
        <dbReference type="ChEBI" id="CHEBI:15377"/>
        <dbReference type="ChEBI" id="CHEBI:15378"/>
        <dbReference type="ChEBI" id="CHEBI:30823"/>
        <dbReference type="ChEBI" id="CHEBI:84201"/>
        <dbReference type="ChEBI" id="CHEBI:136302"/>
    </reaction>
    <physiologicalReaction direction="left-to-right" evidence="1">
        <dbReference type="Rhea" id="RHEA:52061"/>
    </physiologicalReaction>
</comment>
<comment type="catalytic activity">
    <reaction evidence="1">
        <text>13-(9Z-octadecenoyloxy)-octadecanoate + H2O = 13-hydroxy-octadecanoate + (9Z)-octadecenoate + H(+)</text>
        <dbReference type="Rhea" id="RHEA:52064"/>
        <dbReference type="ChEBI" id="CHEBI:15377"/>
        <dbReference type="ChEBI" id="CHEBI:15378"/>
        <dbReference type="ChEBI" id="CHEBI:30823"/>
        <dbReference type="ChEBI" id="CHEBI:136303"/>
        <dbReference type="ChEBI" id="CHEBI:136304"/>
    </reaction>
    <physiologicalReaction direction="left-to-right" evidence="1">
        <dbReference type="Rhea" id="RHEA:52065"/>
    </physiologicalReaction>
</comment>
<comment type="catalytic activity">
    <reaction evidence="1">
        <text>5-(9Z-octadecenoyloxy)-octadecanoate + H2O = 5-hydroxy-octadecanoate + (9Z)-octadecenoate + H(+)</text>
        <dbReference type="Rhea" id="RHEA:52100"/>
        <dbReference type="ChEBI" id="CHEBI:15377"/>
        <dbReference type="ChEBI" id="CHEBI:15378"/>
        <dbReference type="ChEBI" id="CHEBI:30823"/>
        <dbReference type="ChEBI" id="CHEBI:136370"/>
        <dbReference type="ChEBI" id="CHEBI:136389"/>
    </reaction>
    <physiologicalReaction direction="left-to-right" evidence="1">
        <dbReference type="Rhea" id="RHEA:52101"/>
    </physiologicalReaction>
</comment>
<comment type="subcellular location">
    <subcellularLocation>
        <location evidence="1">Cell membrane</location>
        <topology evidence="2">Multi-pass membrane protein</topology>
    </subcellularLocation>
    <text evidence="1">Colocalized with TFPI and CAV1 in lipid rafts.</text>
</comment>
<comment type="similarity">
    <text evidence="3">Belongs to the AIG1 family.</text>
</comment>
<comment type="sequence caution" evidence="3">
    <conflict type="erroneous gene model prediction">
        <sequence resource="EMBL" id="AC165263"/>
    </conflict>
</comment>
<comment type="sequence caution" evidence="3">
    <conflict type="erroneous initiation">
        <sequence resource="EMBL-CDS" id="BAC26250"/>
    </conflict>
    <text>Extended N-terminus.</text>
</comment>
<name>ADTRP_MOUSE</name>
<feature type="chain" id="PRO_0000190102" description="Androgen-dependent TFPI-regulating protein">
    <location>
        <begin position="1"/>
        <end position="230"/>
    </location>
</feature>
<feature type="topological domain" description="Cytoplasmic" evidence="1">
    <location>
        <begin position="1"/>
        <end position="7"/>
    </location>
</feature>
<feature type="transmembrane region" description="Helical" evidence="2">
    <location>
        <begin position="8"/>
        <end position="28"/>
    </location>
</feature>
<feature type="topological domain" description="Extracellular" evidence="1">
    <location>
        <begin position="29"/>
        <end position="45"/>
    </location>
</feature>
<feature type="transmembrane region" description="Helical" evidence="2">
    <location>
        <begin position="46"/>
        <end position="66"/>
    </location>
</feature>
<feature type="topological domain" description="Cytoplasmic" evidence="1">
    <location>
        <begin position="67"/>
        <end position="85"/>
    </location>
</feature>
<feature type="transmembrane region" description="Helical" evidence="2">
    <location>
        <begin position="86"/>
        <end position="106"/>
    </location>
</feature>
<feature type="topological domain" description="Extracellular" evidence="1">
    <location>
        <begin position="107"/>
        <end position="120"/>
    </location>
</feature>
<feature type="transmembrane region" description="Helical" evidence="2">
    <location>
        <begin position="121"/>
        <end position="141"/>
    </location>
</feature>
<feature type="topological domain" description="Cytoplasmic" evidence="1">
    <location>
        <begin position="142"/>
        <end position="154"/>
    </location>
</feature>
<feature type="transmembrane region" description="Helical" evidence="2">
    <location>
        <begin position="155"/>
        <end position="175"/>
    </location>
</feature>
<feature type="topological domain" description="Extracellular" evidence="1">
    <location>
        <begin position="176"/>
        <end position="190"/>
    </location>
</feature>
<feature type="transmembrane region" description="Helical" evidence="2">
    <location>
        <begin position="191"/>
        <end position="211"/>
    </location>
</feature>
<feature type="topological domain" description="Cytoplasmic" evidence="1">
    <location>
        <begin position="212"/>
        <end position="230"/>
    </location>
</feature>
<feature type="site" description="Important for catalytic activity" evidence="1">
    <location>
        <position position="47"/>
    </location>
</feature>
<feature type="site" description="Important for catalytic activity" evidence="1">
    <location>
        <position position="131"/>
    </location>
</feature>
<evidence type="ECO:0000250" key="1">
    <source>
        <dbReference type="UniProtKB" id="Q96IZ2"/>
    </source>
</evidence>
<evidence type="ECO:0000255" key="2"/>
<evidence type="ECO:0000305" key="3"/>
<organism>
    <name type="scientific">Mus musculus</name>
    <name type="common">Mouse</name>
    <dbReference type="NCBI Taxonomy" id="10090"/>
    <lineage>
        <taxon>Eukaryota</taxon>
        <taxon>Metazoa</taxon>
        <taxon>Chordata</taxon>
        <taxon>Craniata</taxon>
        <taxon>Vertebrata</taxon>
        <taxon>Euteleostomi</taxon>
        <taxon>Mammalia</taxon>
        <taxon>Eutheria</taxon>
        <taxon>Euarchontoglires</taxon>
        <taxon>Glires</taxon>
        <taxon>Rodentia</taxon>
        <taxon>Myomorpha</taxon>
        <taxon>Muroidea</taxon>
        <taxon>Muridae</taxon>
        <taxon>Murinae</taxon>
        <taxon>Mus</taxon>
        <taxon>Mus</taxon>
    </lineage>
</organism>
<reference key="1">
    <citation type="journal article" date="2005" name="Science">
        <title>The transcriptional landscape of the mammalian genome.</title>
        <authorList>
            <person name="Carninci P."/>
            <person name="Kasukawa T."/>
            <person name="Katayama S."/>
            <person name="Gough J."/>
            <person name="Frith M.C."/>
            <person name="Maeda N."/>
            <person name="Oyama R."/>
            <person name="Ravasi T."/>
            <person name="Lenhard B."/>
            <person name="Wells C."/>
            <person name="Kodzius R."/>
            <person name="Shimokawa K."/>
            <person name="Bajic V.B."/>
            <person name="Brenner S.E."/>
            <person name="Batalov S."/>
            <person name="Forrest A.R."/>
            <person name="Zavolan M."/>
            <person name="Davis M.J."/>
            <person name="Wilming L.G."/>
            <person name="Aidinis V."/>
            <person name="Allen J.E."/>
            <person name="Ambesi-Impiombato A."/>
            <person name="Apweiler R."/>
            <person name="Aturaliya R.N."/>
            <person name="Bailey T.L."/>
            <person name="Bansal M."/>
            <person name="Baxter L."/>
            <person name="Beisel K.W."/>
            <person name="Bersano T."/>
            <person name="Bono H."/>
            <person name="Chalk A.M."/>
            <person name="Chiu K.P."/>
            <person name="Choudhary V."/>
            <person name="Christoffels A."/>
            <person name="Clutterbuck D.R."/>
            <person name="Crowe M.L."/>
            <person name="Dalla E."/>
            <person name="Dalrymple B.P."/>
            <person name="de Bono B."/>
            <person name="Della Gatta G."/>
            <person name="di Bernardo D."/>
            <person name="Down T."/>
            <person name="Engstrom P."/>
            <person name="Fagiolini M."/>
            <person name="Faulkner G."/>
            <person name="Fletcher C.F."/>
            <person name="Fukushima T."/>
            <person name="Furuno M."/>
            <person name="Futaki S."/>
            <person name="Gariboldi M."/>
            <person name="Georgii-Hemming P."/>
            <person name="Gingeras T.R."/>
            <person name="Gojobori T."/>
            <person name="Green R.E."/>
            <person name="Gustincich S."/>
            <person name="Harbers M."/>
            <person name="Hayashi Y."/>
            <person name="Hensch T.K."/>
            <person name="Hirokawa N."/>
            <person name="Hill D."/>
            <person name="Huminiecki L."/>
            <person name="Iacono M."/>
            <person name="Ikeo K."/>
            <person name="Iwama A."/>
            <person name="Ishikawa T."/>
            <person name="Jakt M."/>
            <person name="Kanapin A."/>
            <person name="Katoh M."/>
            <person name="Kawasawa Y."/>
            <person name="Kelso J."/>
            <person name="Kitamura H."/>
            <person name="Kitano H."/>
            <person name="Kollias G."/>
            <person name="Krishnan S.P."/>
            <person name="Kruger A."/>
            <person name="Kummerfeld S.K."/>
            <person name="Kurochkin I.V."/>
            <person name="Lareau L.F."/>
            <person name="Lazarevic D."/>
            <person name="Lipovich L."/>
            <person name="Liu J."/>
            <person name="Liuni S."/>
            <person name="McWilliam S."/>
            <person name="Madan Babu M."/>
            <person name="Madera M."/>
            <person name="Marchionni L."/>
            <person name="Matsuda H."/>
            <person name="Matsuzawa S."/>
            <person name="Miki H."/>
            <person name="Mignone F."/>
            <person name="Miyake S."/>
            <person name="Morris K."/>
            <person name="Mottagui-Tabar S."/>
            <person name="Mulder N."/>
            <person name="Nakano N."/>
            <person name="Nakauchi H."/>
            <person name="Ng P."/>
            <person name="Nilsson R."/>
            <person name="Nishiguchi S."/>
            <person name="Nishikawa S."/>
            <person name="Nori F."/>
            <person name="Ohara O."/>
            <person name="Okazaki Y."/>
            <person name="Orlando V."/>
            <person name="Pang K.C."/>
            <person name="Pavan W.J."/>
            <person name="Pavesi G."/>
            <person name="Pesole G."/>
            <person name="Petrovsky N."/>
            <person name="Piazza S."/>
            <person name="Reed J."/>
            <person name="Reid J.F."/>
            <person name="Ring B.Z."/>
            <person name="Ringwald M."/>
            <person name="Rost B."/>
            <person name="Ruan Y."/>
            <person name="Salzberg S.L."/>
            <person name="Sandelin A."/>
            <person name="Schneider C."/>
            <person name="Schoenbach C."/>
            <person name="Sekiguchi K."/>
            <person name="Semple C.A."/>
            <person name="Seno S."/>
            <person name="Sessa L."/>
            <person name="Sheng Y."/>
            <person name="Shibata Y."/>
            <person name="Shimada H."/>
            <person name="Shimada K."/>
            <person name="Silva D."/>
            <person name="Sinclair B."/>
            <person name="Sperling S."/>
            <person name="Stupka E."/>
            <person name="Sugiura K."/>
            <person name="Sultana R."/>
            <person name="Takenaka Y."/>
            <person name="Taki K."/>
            <person name="Tammoja K."/>
            <person name="Tan S.L."/>
            <person name="Tang S."/>
            <person name="Taylor M.S."/>
            <person name="Tegner J."/>
            <person name="Teichmann S.A."/>
            <person name="Ueda H.R."/>
            <person name="van Nimwegen E."/>
            <person name="Verardo R."/>
            <person name="Wei C.L."/>
            <person name="Yagi K."/>
            <person name="Yamanishi H."/>
            <person name="Zabarovsky E."/>
            <person name="Zhu S."/>
            <person name="Zimmer A."/>
            <person name="Hide W."/>
            <person name="Bult C."/>
            <person name="Grimmond S.M."/>
            <person name="Teasdale R.D."/>
            <person name="Liu E.T."/>
            <person name="Brusic V."/>
            <person name="Quackenbush J."/>
            <person name="Wahlestedt C."/>
            <person name="Mattick J.S."/>
            <person name="Hume D.A."/>
            <person name="Kai C."/>
            <person name="Sasaki D."/>
            <person name="Tomaru Y."/>
            <person name="Fukuda S."/>
            <person name="Kanamori-Katayama M."/>
            <person name="Suzuki M."/>
            <person name="Aoki J."/>
            <person name="Arakawa T."/>
            <person name="Iida J."/>
            <person name="Imamura K."/>
            <person name="Itoh M."/>
            <person name="Kato T."/>
            <person name="Kawaji H."/>
            <person name="Kawagashira N."/>
            <person name="Kawashima T."/>
            <person name="Kojima M."/>
            <person name="Kondo S."/>
            <person name="Konno H."/>
            <person name="Nakano K."/>
            <person name="Ninomiya N."/>
            <person name="Nishio T."/>
            <person name="Okada M."/>
            <person name="Plessy C."/>
            <person name="Shibata K."/>
            <person name="Shiraki T."/>
            <person name="Suzuki S."/>
            <person name="Tagami M."/>
            <person name="Waki K."/>
            <person name="Watahiki A."/>
            <person name="Okamura-Oho Y."/>
            <person name="Suzuki H."/>
            <person name="Kawai J."/>
            <person name="Hayashizaki Y."/>
        </authorList>
    </citation>
    <scope>NUCLEOTIDE SEQUENCE [LARGE SCALE MRNA]</scope>
    <source>
        <strain>C57BL/6J</strain>
        <tissue>Skin</tissue>
        <tissue>Wolffian duct</tissue>
    </source>
</reference>
<reference key="2">
    <citation type="journal article" date="2009" name="PLoS Biol.">
        <title>Lineage-specific biology revealed by a finished genome assembly of the mouse.</title>
        <authorList>
            <person name="Church D.M."/>
            <person name="Goodstadt L."/>
            <person name="Hillier L.W."/>
            <person name="Zody M.C."/>
            <person name="Goldstein S."/>
            <person name="She X."/>
            <person name="Bult C.J."/>
            <person name="Agarwala R."/>
            <person name="Cherry J.L."/>
            <person name="DiCuccio M."/>
            <person name="Hlavina W."/>
            <person name="Kapustin Y."/>
            <person name="Meric P."/>
            <person name="Maglott D."/>
            <person name="Birtle Z."/>
            <person name="Marques A.C."/>
            <person name="Graves T."/>
            <person name="Zhou S."/>
            <person name="Teague B."/>
            <person name="Potamousis K."/>
            <person name="Churas C."/>
            <person name="Place M."/>
            <person name="Herschleb J."/>
            <person name="Runnheim R."/>
            <person name="Forrest D."/>
            <person name="Amos-Landgraf J."/>
            <person name="Schwartz D.C."/>
            <person name="Cheng Z."/>
            <person name="Lindblad-Toh K."/>
            <person name="Eichler E.E."/>
            <person name="Ponting C.P."/>
        </authorList>
    </citation>
    <scope>NUCLEOTIDE SEQUENCE [LARGE SCALE GENOMIC DNA]</scope>
    <source>
        <strain>C57BL/6J</strain>
    </source>
</reference>
<reference key="3">
    <citation type="journal article" date="2004" name="Genome Res.">
        <title>The status, quality, and expansion of the NIH full-length cDNA project: the Mammalian Gene Collection (MGC).</title>
        <authorList>
            <consortium name="The MGC Project Team"/>
        </authorList>
    </citation>
    <scope>NUCLEOTIDE SEQUENCE [LARGE SCALE MRNA]</scope>
    <source>
        <strain>FVB/N</strain>
        <tissue>Liver</tissue>
    </source>
</reference>
<sequence>MTKTTTCVYHFLVLNWYIFLNYHIPQIGRNEEKLREFHDGGRSKYLTLLNLLLQAIFFGVACLDDVLKRVIGRKDIKFVTSFRDLLFTTMAFPISTFVFLVFWTLFHYDRSLVYPKGLDDFFPAWVNHAMHTSIFPFSLFETILRPHNYPSKKLGLTLLGAFNFAYIIRILWRYVQTGNWVYPVFDSLSPLGIIIFFSAAYILVAGIYLFGEKINHWKWGAIAKPQMKKN</sequence>
<keyword id="KW-1003">Cell membrane</keyword>
<keyword id="KW-0378">Hydrolase</keyword>
<keyword id="KW-0443">Lipid metabolism</keyword>
<keyword id="KW-0472">Membrane</keyword>
<keyword id="KW-1185">Reference proteome</keyword>
<keyword id="KW-0812">Transmembrane</keyword>
<keyword id="KW-1133">Transmembrane helix</keyword>
<gene>
    <name type="primary">Adtrp</name>
</gene>
<protein>
    <recommendedName>
        <fullName>Androgen-dependent TFPI-regulating protein</fullName>
    </recommendedName>
    <alternativeName>
        <fullName evidence="1">Fatty acid esters of hydroxy fatty acids hydrolase ADTRP</fullName>
        <shortName evidence="1">FAHFA hydrolase ADTRP</shortName>
        <ecNumber evidence="1">3.1.-.-</ecNumber>
    </alternativeName>
</protein>
<dbReference type="EC" id="3.1.-.-" evidence="1"/>
<dbReference type="EMBL" id="AK029025">
    <property type="protein sequence ID" value="BAC26250.1"/>
    <property type="status" value="ALT_INIT"/>
    <property type="molecule type" value="mRNA"/>
</dbReference>
<dbReference type="EMBL" id="AK135327">
    <property type="protein sequence ID" value="BAE22490.1"/>
    <property type="molecule type" value="mRNA"/>
</dbReference>
<dbReference type="EMBL" id="AC165263">
    <property type="status" value="NOT_ANNOTATED_CDS"/>
    <property type="molecule type" value="Genomic_DNA"/>
</dbReference>
<dbReference type="EMBL" id="BC027755">
    <property type="protein sequence ID" value="AAH27755.1"/>
    <property type="molecule type" value="mRNA"/>
</dbReference>
<dbReference type="CCDS" id="CCDS49250.1"/>
<dbReference type="RefSeq" id="NP_001139347.1">
    <property type="nucleotide sequence ID" value="NM_001145875.1"/>
</dbReference>
<dbReference type="RefSeq" id="NP_780626.1">
    <property type="nucleotide sequence ID" value="NM_175417.4"/>
</dbReference>
<dbReference type="RefSeq" id="XP_030102986.1">
    <property type="nucleotide sequence ID" value="XM_030247126.1"/>
</dbReference>
<dbReference type="FunCoup" id="Q8C138">
    <property type="interactions" value="7"/>
</dbReference>
<dbReference type="STRING" id="10090.ENSMUSP00000071899"/>
<dbReference type="iPTMnet" id="Q8C138"/>
<dbReference type="PhosphoSitePlus" id="Q8C138"/>
<dbReference type="jPOST" id="Q8C138"/>
<dbReference type="PaxDb" id="10090-ENSMUSP00000071899"/>
<dbReference type="Antibodypedia" id="63585">
    <property type="antibodies" value="4 antibodies from 4 providers"/>
</dbReference>
<dbReference type="DNASU" id="109254"/>
<dbReference type="Ensembl" id="ENSMUST00000121404.8">
    <property type="protein sequence ID" value="ENSMUSP00000113661.2"/>
    <property type="gene ID" value="ENSMUSG00000058022.16"/>
</dbReference>
<dbReference type="GeneID" id="109254"/>
<dbReference type="KEGG" id="mmu:109254"/>
<dbReference type="UCSC" id="uc007qfh.1">
    <property type="organism name" value="mouse"/>
</dbReference>
<dbReference type="AGR" id="MGI:1924596"/>
<dbReference type="CTD" id="84830"/>
<dbReference type="MGI" id="MGI:1924596">
    <property type="gene designation" value="Adtrp"/>
</dbReference>
<dbReference type="VEuPathDB" id="HostDB:ENSMUSG00000058022"/>
<dbReference type="eggNOG" id="KOG3989">
    <property type="taxonomic scope" value="Eukaryota"/>
</dbReference>
<dbReference type="GeneTree" id="ENSGT00940000158284"/>
<dbReference type="HOGENOM" id="CLU_073346_2_0_1"/>
<dbReference type="InParanoid" id="Q8C138"/>
<dbReference type="OMA" id="AFFPPWI"/>
<dbReference type="OrthoDB" id="1898221at2759"/>
<dbReference type="PhylomeDB" id="Q8C138"/>
<dbReference type="TreeFam" id="TF318170"/>
<dbReference type="BioGRID-ORCS" id="109254">
    <property type="hits" value="3 hits in 77 CRISPR screens"/>
</dbReference>
<dbReference type="ChiTaRS" id="Adtrp">
    <property type="organism name" value="mouse"/>
</dbReference>
<dbReference type="PRO" id="PR:Q8C138"/>
<dbReference type="Proteomes" id="UP000000589">
    <property type="component" value="Chromosome 13"/>
</dbReference>
<dbReference type="RNAct" id="Q8C138">
    <property type="molecule type" value="protein"/>
</dbReference>
<dbReference type="Bgee" id="ENSMUSG00000058022">
    <property type="expression patterns" value="Expressed in left lobe of liver and 104 other cell types or tissues"/>
</dbReference>
<dbReference type="ExpressionAtlas" id="Q8C138">
    <property type="expression patterns" value="baseline and differential"/>
</dbReference>
<dbReference type="GO" id="GO:0005901">
    <property type="term" value="C:caveola"/>
    <property type="evidence" value="ECO:0007669"/>
    <property type="project" value="Ensembl"/>
</dbReference>
<dbReference type="GO" id="GO:0009986">
    <property type="term" value="C:cell surface"/>
    <property type="evidence" value="ECO:0007669"/>
    <property type="project" value="Ensembl"/>
</dbReference>
<dbReference type="GO" id="GO:0016787">
    <property type="term" value="F:hydrolase activity"/>
    <property type="evidence" value="ECO:0007669"/>
    <property type="project" value="UniProtKB-KW"/>
</dbReference>
<dbReference type="GO" id="GO:0002042">
    <property type="term" value="P:cell migration involved in sprouting angiogenesis"/>
    <property type="evidence" value="ECO:0007669"/>
    <property type="project" value="Ensembl"/>
</dbReference>
<dbReference type="GO" id="GO:0140052">
    <property type="term" value="P:cellular response to oxidised low-density lipoprotein particle stimulus"/>
    <property type="evidence" value="ECO:0007669"/>
    <property type="project" value="Ensembl"/>
</dbReference>
<dbReference type="GO" id="GO:0071383">
    <property type="term" value="P:cellular response to steroid hormone stimulus"/>
    <property type="evidence" value="ECO:0007669"/>
    <property type="project" value="Ensembl"/>
</dbReference>
<dbReference type="GO" id="GO:0042758">
    <property type="term" value="P:long-chain fatty acid catabolic process"/>
    <property type="evidence" value="ECO:0007669"/>
    <property type="project" value="Ensembl"/>
</dbReference>
<dbReference type="GO" id="GO:0030195">
    <property type="term" value="P:negative regulation of blood coagulation"/>
    <property type="evidence" value="ECO:0007669"/>
    <property type="project" value="Ensembl"/>
</dbReference>
<dbReference type="GO" id="GO:0003332">
    <property type="term" value="P:negative regulation of extracellular matrix constituent secretion"/>
    <property type="evidence" value="ECO:0007669"/>
    <property type="project" value="Ensembl"/>
</dbReference>
<dbReference type="GO" id="GO:1903038">
    <property type="term" value="P:negative regulation of leukocyte cell-cell adhesion"/>
    <property type="evidence" value="ECO:0007669"/>
    <property type="project" value="Ensembl"/>
</dbReference>
<dbReference type="GO" id="GO:2000402">
    <property type="term" value="P:negative regulation of lymphocyte migration"/>
    <property type="evidence" value="ECO:0007669"/>
    <property type="project" value="Ensembl"/>
</dbReference>
<dbReference type="GO" id="GO:0050709">
    <property type="term" value="P:negative regulation of protein secretion"/>
    <property type="evidence" value="ECO:0007669"/>
    <property type="project" value="Ensembl"/>
</dbReference>
<dbReference type="GO" id="GO:0010628">
    <property type="term" value="P:positive regulation of gene expression"/>
    <property type="evidence" value="ECO:0007669"/>
    <property type="project" value="Ensembl"/>
</dbReference>
<dbReference type="GO" id="GO:0051897">
    <property type="term" value="P:positive regulation of phosphatidylinositol 3-kinase/protein kinase B signal transduction"/>
    <property type="evidence" value="ECO:0007669"/>
    <property type="project" value="Ensembl"/>
</dbReference>
<dbReference type="InterPro" id="IPR006838">
    <property type="entry name" value="ADTRP_AIG1"/>
</dbReference>
<dbReference type="PANTHER" id="PTHR10989:SF17">
    <property type="entry name" value="ANDROGEN-DEPENDENT TFPI-REGULATING PROTEIN"/>
    <property type="match status" value="1"/>
</dbReference>
<dbReference type="PANTHER" id="PTHR10989">
    <property type="entry name" value="ANDROGEN-INDUCED PROTEIN 1-RELATED"/>
    <property type="match status" value="1"/>
</dbReference>
<dbReference type="Pfam" id="PF04750">
    <property type="entry name" value="Far-17a_AIG1"/>
    <property type="match status" value="1"/>
</dbReference>